<dbReference type="EMBL" id="AE005176">
    <property type="protein sequence ID" value="AAK05770.1"/>
    <property type="molecule type" value="Genomic_DNA"/>
</dbReference>
<dbReference type="PIR" id="H86833">
    <property type="entry name" value="H86833"/>
</dbReference>
<dbReference type="RefSeq" id="NP_267828.1">
    <property type="nucleotide sequence ID" value="NC_002662.1"/>
</dbReference>
<dbReference type="PaxDb" id="272623-L122982"/>
<dbReference type="EnsemblBacteria" id="AAK05770">
    <property type="protein sequence ID" value="AAK05770"/>
    <property type="gene ID" value="L122982"/>
</dbReference>
<dbReference type="KEGG" id="lla:L122982"/>
<dbReference type="PATRIC" id="fig|272623.7.peg.1793"/>
<dbReference type="eggNOG" id="COG0759">
    <property type="taxonomic scope" value="Bacteria"/>
</dbReference>
<dbReference type="HOGENOM" id="CLU_144811_2_2_9"/>
<dbReference type="OrthoDB" id="9801753at2"/>
<dbReference type="Proteomes" id="UP000002196">
    <property type="component" value="Chromosome"/>
</dbReference>
<dbReference type="GO" id="GO:0005886">
    <property type="term" value="C:plasma membrane"/>
    <property type="evidence" value="ECO:0007669"/>
    <property type="project" value="UniProtKB-SubCell"/>
</dbReference>
<dbReference type="HAMAP" id="MF_00386">
    <property type="entry name" value="UPF0161_YidD"/>
    <property type="match status" value="1"/>
</dbReference>
<dbReference type="InterPro" id="IPR002696">
    <property type="entry name" value="Membr_insert_effic_factor_YidD"/>
</dbReference>
<dbReference type="NCBIfam" id="TIGR00278">
    <property type="entry name" value="membrane protein insertion efficiency factor YidD"/>
    <property type="match status" value="1"/>
</dbReference>
<dbReference type="PANTHER" id="PTHR33383">
    <property type="entry name" value="MEMBRANE PROTEIN INSERTION EFFICIENCY FACTOR-RELATED"/>
    <property type="match status" value="1"/>
</dbReference>
<dbReference type="PANTHER" id="PTHR33383:SF1">
    <property type="entry name" value="MEMBRANE PROTEIN INSERTION EFFICIENCY FACTOR-RELATED"/>
    <property type="match status" value="1"/>
</dbReference>
<dbReference type="Pfam" id="PF01809">
    <property type="entry name" value="YidD"/>
    <property type="match status" value="1"/>
</dbReference>
<dbReference type="SMART" id="SM01234">
    <property type="entry name" value="Haemolytic"/>
    <property type="match status" value="1"/>
</dbReference>
<gene>
    <name type="primary">yrcB</name>
    <name type="ordered locus">LL1672</name>
    <name type="ORF">L122982</name>
</gene>
<organism>
    <name type="scientific">Lactococcus lactis subsp. lactis (strain IL1403)</name>
    <name type="common">Streptococcus lactis</name>
    <dbReference type="NCBI Taxonomy" id="272623"/>
    <lineage>
        <taxon>Bacteria</taxon>
        <taxon>Bacillati</taxon>
        <taxon>Bacillota</taxon>
        <taxon>Bacilli</taxon>
        <taxon>Lactobacillales</taxon>
        <taxon>Streptococcaceae</taxon>
        <taxon>Lactococcus</taxon>
    </lineage>
</organism>
<proteinExistence type="inferred from homology"/>
<accession>Q9CF09</accession>
<reference key="1">
    <citation type="journal article" date="2001" name="Genome Res.">
        <title>The complete genome sequence of the lactic acid bacterium Lactococcus lactis ssp. lactis IL1403.</title>
        <authorList>
            <person name="Bolotin A."/>
            <person name="Wincker P."/>
            <person name="Mauger S."/>
            <person name="Jaillon O."/>
            <person name="Malarme K."/>
            <person name="Weissenbach J."/>
            <person name="Ehrlich S.D."/>
            <person name="Sorokin A."/>
        </authorList>
    </citation>
    <scope>NUCLEOTIDE SEQUENCE [LARGE SCALE GENOMIC DNA]</scope>
    <source>
        <strain>IL1403</strain>
    </source>
</reference>
<evidence type="ECO:0000255" key="1">
    <source>
        <dbReference type="HAMAP-Rule" id="MF_00386"/>
    </source>
</evidence>
<comment type="function">
    <text evidence="1">Could be involved in insertion of integral membrane proteins into the membrane.</text>
</comment>
<comment type="subcellular location">
    <subcellularLocation>
        <location evidence="1">Cell membrane</location>
        <topology evidence="1">Peripheral membrane protein</topology>
        <orientation evidence="1">Cytoplasmic side</orientation>
    </subcellularLocation>
</comment>
<comment type="similarity">
    <text evidence="1">Belongs to the UPF0161 family.</text>
</comment>
<sequence>MKKVLVKAVHGYQRWISPALPPACRYYPTCSNYMVQAIEKHGPAKGLAMGTARILRCHPFCQPGYDLVPDHFSLRRNWAEPEKEEDSN</sequence>
<keyword id="KW-1003">Cell membrane</keyword>
<keyword id="KW-0472">Membrane</keyword>
<keyword id="KW-1185">Reference proteome</keyword>
<feature type="chain" id="PRO_0000171832" description="Putative membrane protein insertion efficiency factor">
    <location>
        <begin position="1"/>
        <end position="88"/>
    </location>
</feature>
<name>YIDD_LACLA</name>
<protein>
    <recommendedName>
        <fullName evidence="1">Putative membrane protein insertion efficiency factor</fullName>
    </recommendedName>
</protein>